<organism>
    <name type="scientific">Alteromonas mediterranea (strain DSM 17117 / CIP 110805 / LMG 28347 / Deep ecotype)</name>
    <dbReference type="NCBI Taxonomy" id="1774373"/>
    <lineage>
        <taxon>Bacteria</taxon>
        <taxon>Pseudomonadati</taxon>
        <taxon>Pseudomonadota</taxon>
        <taxon>Gammaproteobacteria</taxon>
        <taxon>Alteromonadales</taxon>
        <taxon>Alteromonadaceae</taxon>
        <taxon>Alteromonas/Salinimonas group</taxon>
        <taxon>Alteromonas</taxon>
    </lineage>
</organism>
<accession>B4RY34</accession>
<accession>F2G767</accession>
<proteinExistence type="inferred from homology"/>
<evidence type="ECO:0000255" key="1">
    <source>
        <dbReference type="HAMAP-Rule" id="MF_00358"/>
    </source>
</evidence>
<evidence type="ECO:0000305" key="2"/>
<comment type="similarity">
    <text evidence="1">Belongs to the bacterial ribosomal protein bS21 family.</text>
</comment>
<name>RS21_ALTMD</name>
<sequence length="71" mass="8667">MPIVKVRENEPFDVALRRFKRSCEKAGVLSEVRRREFFEKPTWERKRKKAAAKKRHLKKLARENARRVKLY</sequence>
<dbReference type="EMBL" id="CP001103">
    <property type="protein sequence ID" value="AEA96904.1"/>
    <property type="molecule type" value="Genomic_DNA"/>
</dbReference>
<dbReference type="RefSeq" id="WP_012517258.1">
    <property type="nucleotide sequence ID" value="NC_011138.3"/>
</dbReference>
<dbReference type="SMR" id="B4RY34"/>
<dbReference type="GeneID" id="83256955"/>
<dbReference type="KEGG" id="amc:MADE_1003780"/>
<dbReference type="HOGENOM" id="CLU_159258_1_0_6"/>
<dbReference type="Proteomes" id="UP000001870">
    <property type="component" value="Chromosome"/>
</dbReference>
<dbReference type="GO" id="GO:1990904">
    <property type="term" value="C:ribonucleoprotein complex"/>
    <property type="evidence" value="ECO:0007669"/>
    <property type="project" value="UniProtKB-KW"/>
</dbReference>
<dbReference type="GO" id="GO:0005840">
    <property type="term" value="C:ribosome"/>
    <property type="evidence" value="ECO:0007669"/>
    <property type="project" value="UniProtKB-KW"/>
</dbReference>
<dbReference type="GO" id="GO:0003735">
    <property type="term" value="F:structural constituent of ribosome"/>
    <property type="evidence" value="ECO:0007669"/>
    <property type="project" value="InterPro"/>
</dbReference>
<dbReference type="GO" id="GO:0006412">
    <property type="term" value="P:translation"/>
    <property type="evidence" value="ECO:0007669"/>
    <property type="project" value="UniProtKB-UniRule"/>
</dbReference>
<dbReference type="Gene3D" id="1.20.5.1150">
    <property type="entry name" value="Ribosomal protein S8"/>
    <property type="match status" value="1"/>
</dbReference>
<dbReference type="HAMAP" id="MF_00358">
    <property type="entry name" value="Ribosomal_bS21"/>
    <property type="match status" value="1"/>
</dbReference>
<dbReference type="InterPro" id="IPR001911">
    <property type="entry name" value="Ribosomal_bS21"/>
</dbReference>
<dbReference type="InterPro" id="IPR018278">
    <property type="entry name" value="Ribosomal_bS21_CS"/>
</dbReference>
<dbReference type="InterPro" id="IPR038380">
    <property type="entry name" value="Ribosomal_bS21_sf"/>
</dbReference>
<dbReference type="NCBIfam" id="TIGR00030">
    <property type="entry name" value="S21p"/>
    <property type="match status" value="1"/>
</dbReference>
<dbReference type="PANTHER" id="PTHR21109">
    <property type="entry name" value="MITOCHONDRIAL 28S RIBOSOMAL PROTEIN S21"/>
    <property type="match status" value="1"/>
</dbReference>
<dbReference type="PANTHER" id="PTHR21109:SF22">
    <property type="entry name" value="SMALL RIBOSOMAL SUBUNIT PROTEIN BS21"/>
    <property type="match status" value="1"/>
</dbReference>
<dbReference type="Pfam" id="PF01165">
    <property type="entry name" value="Ribosomal_S21"/>
    <property type="match status" value="1"/>
</dbReference>
<dbReference type="PRINTS" id="PR00976">
    <property type="entry name" value="RIBOSOMALS21"/>
</dbReference>
<dbReference type="PROSITE" id="PS01181">
    <property type="entry name" value="RIBOSOMAL_S21"/>
    <property type="match status" value="1"/>
</dbReference>
<gene>
    <name evidence="1" type="primary">rpsU</name>
    <name type="ordered locus">MADE_1003780</name>
</gene>
<reference key="1">
    <citation type="journal article" date="2008" name="ISME J.">
        <title>Comparative genomics of two ecotypes of the marine planktonic copiotroph Alteromonas macleodii suggests alternative lifestyles associated with different kinds of particulate organic matter.</title>
        <authorList>
            <person name="Ivars-Martinez E."/>
            <person name="Martin-Cuadrado A.-B."/>
            <person name="D'Auria G."/>
            <person name="Mira A."/>
            <person name="Ferriera S."/>
            <person name="Johnson J."/>
            <person name="Friedman R."/>
            <person name="Rodriguez-Valera F."/>
        </authorList>
    </citation>
    <scope>NUCLEOTIDE SEQUENCE [LARGE SCALE GENOMIC DNA]</scope>
    <source>
        <strain>DSM 17117 / CIP 110805 / LMG 28347 / Deep ecotype</strain>
    </source>
</reference>
<feature type="chain" id="PRO_1000120580" description="Small ribosomal subunit protein bS21">
    <location>
        <begin position="1"/>
        <end position="71"/>
    </location>
</feature>
<protein>
    <recommendedName>
        <fullName evidence="1">Small ribosomal subunit protein bS21</fullName>
    </recommendedName>
    <alternativeName>
        <fullName evidence="2">30S ribosomal protein S21</fullName>
    </alternativeName>
</protein>
<keyword id="KW-0687">Ribonucleoprotein</keyword>
<keyword id="KW-0689">Ribosomal protein</keyword>